<protein>
    <recommendedName>
        <fullName evidence="1">Multidrug resistance protein MdtA</fullName>
    </recommendedName>
    <alternativeName>
        <fullName evidence="1">Multidrug transporter MdtA</fullName>
    </alternativeName>
</protein>
<reference key="1">
    <citation type="journal article" date="2007" name="PLoS Genet.">
        <title>The complete genome sequence of Yersinia pseudotuberculosis IP31758, the causative agent of Far East scarlet-like fever.</title>
        <authorList>
            <person name="Eppinger M."/>
            <person name="Rosovitz M.J."/>
            <person name="Fricke W.F."/>
            <person name="Rasko D.A."/>
            <person name="Kokorina G."/>
            <person name="Fayolle C."/>
            <person name="Lindler L.E."/>
            <person name="Carniel E."/>
            <person name="Ravel J."/>
        </authorList>
    </citation>
    <scope>NUCLEOTIDE SEQUENCE [LARGE SCALE GENOMIC DNA]</scope>
    <source>
        <strain>IP 31758</strain>
    </source>
</reference>
<accession>A7FG18</accession>
<name>MDTA_YERP3</name>
<sequence length="444" mass="47472">MKSQSKRTSRLFVFVGGVVAIIIAVLSWRYFGTGSDNNTSGAQQSARGQDTSHGGRRNTPLAPVQAATATEQEVPRYLTGLGTVIAANTVTVTSRVDGELMALHFTEGQQVKAGDLLAEIDPRPYEVQLTQAQGQLAKDQATLDNARRDLARYQKLSKTGLISQQELDTQSSLVRQSEGSVKADQGAIDSAKLQLTYSRITAPISGRVGLKQVDVGNYITSGTATPIVVITQTHPVDVVFTLPESDIPAIIQAQKNAEKTHAIVPVEAWDRTNKQMLAQGYLLSIDNQIDTTTGTIKLKARFNNEDDVLFPNQFVNARIKVDLLQNAVVVPTAAVQMGSEGNFVWTLDDANKVSKHLVTTGIQNSQQVVIDAGLNAGQRVVTDGIDRLTEGVQVEVVTPRSANTDANPASAEKAAAEAEGSTPHQGRGRPANAPARSTTAAEKS</sequence>
<evidence type="ECO:0000255" key="1">
    <source>
        <dbReference type="HAMAP-Rule" id="MF_01422"/>
    </source>
</evidence>
<evidence type="ECO:0000256" key="2">
    <source>
        <dbReference type="SAM" id="MobiDB-lite"/>
    </source>
</evidence>
<keyword id="KW-0997">Cell inner membrane</keyword>
<keyword id="KW-1003">Cell membrane</keyword>
<keyword id="KW-0472">Membrane</keyword>
<keyword id="KW-0677">Repeat</keyword>
<keyword id="KW-0732">Signal</keyword>
<keyword id="KW-0813">Transport</keyword>
<gene>
    <name evidence="1" type="primary">mdtA</name>
    <name type="ordered locus">YpsIP31758_1215</name>
</gene>
<organism>
    <name type="scientific">Yersinia pseudotuberculosis serotype O:1b (strain IP 31758)</name>
    <dbReference type="NCBI Taxonomy" id="349747"/>
    <lineage>
        <taxon>Bacteria</taxon>
        <taxon>Pseudomonadati</taxon>
        <taxon>Pseudomonadota</taxon>
        <taxon>Gammaproteobacteria</taxon>
        <taxon>Enterobacterales</taxon>
        <taxon>Yersiniaceae</taxon>
        <taxon>Yersinia</taxon>
    </lineage>
</organism>
<proteinExistence type="inferred from homology"/>
<comment type="subunit">
    <text evidence="1">Part of a tripartite efflux system composed of MdtA, MdtB and MdtC.</text>
</comment>
<comment type="subcellular location">
    <subcellularLocation>
        <location evidence="1">Cell inner membrane</location>
        <topology evidence="1">Peripheral membrane protein</topology>
    </subcellularLocation>
</comment>
<comment type="similarity">
    <text evidence="1">Belongs to the membrane fusion protein (MFP) (TC 8.A.1) family.</text>
</comment>
<dbReference type="EMBL" id="CP000720">
    <property type="protein sequence ID" value="ABS45971.1"/>
    <property type="molecule type" value="Genomic_DNA"/>
</dbReference>
<dbReference type="RefSeq" id="WP_012104821.1">
    <property type="nucleotide sequence ID" value="NC_009708.1"/>
</dbReference>
<dbReference type="SMR" id="A7FG18"/>
<dbReference type="KEGG" id="ypi:YpsIP31758_1215"/>
<dbReference type="HOGENOM" id="CLU_018816_2_0_6"/>
<dbReference type="Proteomes" id="UP000002412">
    <property type="component" value="Chromosome"/>
</dbReference>
<dbReference type="GO" id="GO:1990281">
    <property type="term" value="C:efflux pump complex"/>
    <property type="evidence" value="ECO:0007669"/>
    <property type="project" value="TreeGrafter"/>
</dbReference>
<dbReference type="GO" id="GO:0005886">
    <property type="term" value="C:plasma membrane"/>
    <property type="evidence" value="ECO:0007669"/>
    <property type="project" value="UniProtKB-SubCell"/>
</dbReference>
<dbReference type="GO" id="GO:0015562">
    <property type="term" value="F:efflux transmembrane transporter activity"/>
    <property type="evidence" value="ECO:0007669"/>
    <property type="project" value="TreeGrafter"/>
</dbReference>
<dbReference type="FunFam" id="2.40.420.20:FF:000001">
    <property type="entry name" value="Efflux RND transporter periplasmic adaptor subunit"/>
    <property type="match status" value="1"/>
</dbReference>
<dbReference type="FunFam" id="1.10.287.470:FF:000005">
    <property type="entry name" value="Multidrug resistance protein MdtA"/>
    <property type="match status" value="1"/>
</dbReference>
<dbReference type="FunFam" id="2.40.30.170:FF:000006">
    <property type="entry name" value="Multidrug resistance protein MdtA"/>
    <property type="match status" value="1"/>
</dbReference>
<dbReference type="Gene3D" id="2.40.30.170">
    <property type="match status" value="1"/>
</dbReference>
<dbReference type="Gene3D" id="2.40.420.20">
    <property type="match status" value="1"/>
</dbReference>
<dbReference type="Gene3D" id="2.40.50.100">
    <property type="match status" value="1"/>
</dbReference>
<dbReference type="Gene3D" id="1.10.287.470">
    <property type="entry name" value="Helix hairpin bin"/>
    <property type="match status" value="1"/>
</dbReference>
<dbReference type="HAMAP" id="MF_01422">
    <property type="entry name" value="MdtA"/>
    <property type="match status" value="1"/>
</dbReference>
<dbReference type="InterPro" id="IPR032317">
    <property type="entry name" value="CusB_D23"/>
</dbReference>
<dbReference type="InterPro" id="IPR022824">
    <property type="entry name" value="Multidrug-R_MdtA"/>
</dbReference>
<dbReference type="InterPro" id="IPR006143">
    <property type="entry name" value="RND_pump_MFP"/>
</dbReference>
<dbReference type="NCBIfam" id="NF008589">
    <property type="entry name" value="PRK11556.1"/>
    <property type="match status" value="1"/>
</dbReference>
<dbReference type="NCBIfam" id="TIGR01730">
    <property type="entry name" value="RND_mfp"/>
    <property type="match status" value="1"/>
</dbReference>
<dbReference type="PANTHER" id="PTHR30469">
    <property type="entry name" value="MULTIDRUG RESISTANCE PROTEIN MDTA"/>
    <property type="match status" value="1"/>
</dbReference>
<dbReference type="PANTHER" id="PTHR30469:SF12">
    <property type="entry name" value="MULTIDRUG RESISTANCE PROTEIN MDTA"/>
    <property type="match status" value="1"/>
</dbReference>
<dbReference type="Pfam" id="PF16576">
    <property type="entry name" value="HlyD_D23"/>
    <property type="match status" value="1"/>
</dbReference>
<dbReference type="SUPFAM" id="SSF111369">
    <property type="entry name" value="HlyD-like secretion proteins"/>
    <property type="match status" value="1"/>
</dbReference>
<feature type="signal peptide" evidence="1">
    <location>
        <begin position="1"/>
        <end position="20"/>
    </location>
</feature>
<feature type="chain" id="PRO_1000068500" description="Multidrug resistance protein MdtA">
    <location>
        <begin position="21"/>
        <end position="444"/>
    </location>
</feature>
<feature type="region of interest" description="Disordered" evidence="2">
    <location>
        <begin position="37"/>
        <end position="60"/>
    </location>
</feature>
<feature type="region of interest" description="Disordered" evidence="2">
    <location>
        <begin position="398"/>
        <end position="444"/>
    </location>
</feature>
<feature type="compositionally biased region" description="Polar residues" evidence="2">
    <location>
        <begin position="37"/>
        <end position="52"/>
    </location>
</feature>
<feature type="compositionally biased region" description="Low complexity" evidence="2">
    <location>
        <begin position="406"/>
        <end position="419"/>
    </location>
</feature>
<feature type="compositionally biased region" description="Polar residues" evidence="2">
    <location>
        <begin position="435"/>
        <end position="444"/>
    </location>
</feature>